<protein>
    <recommendedName>
        <fullName evidence="1">D-aminoacyl-tRNA deacylase</fullName>
        <shortName evidence="1">DTD</shortName>
        <ecNumber evidence="1">3.1.1.96</ecNumber>
    </recommendedName>
    <alternativeName>
        <fullName evidence="1">Gly-tRNA(Ala) deacylase</fullName>
    </alternativeName>
</protein>
<dbReference type="EC" id="3.1.1.96" evidence="1"/>
<dbReference type="EMBL" id="X72832">
    <property type="protein sequence ID" value="CAA51352.1"/>
    <property type="molecule type" value="Genomic_DNA"/>
</dbReference>
<dbReference type="PIR" id="S39974">
    <property type="entry name" value="S39974"/>
</dbReference>
<dbReference type="RefSeq" id="WP_065354984.1">
    <property type="nucleotide sequence ID" value="NZ_CABEIS010000003.1"/>
</dbReference>
<dbReference type="SMR" id="Q54088"/>
<dbReference type="GO" id="GO:0005737">
    <property type="term" value="C:cytoplasm"/>
    <property type="evidence" value="ECO:0007669"/>
    <property type="project" value="UniProtKB-SubCell"/>
</dbReference>
<dbReference type="GO" id="GO:0051500">
    <property type="term" value="F:D-tyrosyl-tRNA(Tyr) deacylase activity"/>
    <property type="evidence" value="ECO:0007669"/>
    <property type="project" value="TreeGrafter"/>
</dbReference>
<dbReference type="GO" id="GO:0106026">
    <property type="term" value="F:Gly-tRNA(Ala) deacylase activity"/>
    <property type="evidence" value="ECO:0007669"/>
    <property type="project" value="UniProtKB-UniRule"/>
</dbReference>
<dbReference type="GO" id="GO:0043908">
    <property type="term" value="F:Ser(Gly)-tRNA(Ala) hydrolase activity"/>
    <property type="evidence" value="ECO:0007669"/>
    <property type="project" value="UniProtKB-UniRule"/>
</dbReference>
<dbReference type="GO" id="GO:0000049">
    <property type="term" value="F:tRNA binding"/>
    <property type="evidence" value="ECO:0007669"/>
    <property type="project" value="UniProtKB-UniRule"/>
</dbReference>
<dbReference type="GO" id="GO:0019478">
    <property type="term" value="P:D-amino acid catabolic process"/>
    <property type="evidence" value="ECO:0007669"/>
    <property type="project" value="UniProtKB-UniRule"/>
</dbReference>
<dbReference type="CDD" id="cd00563">
    <property type="entry name" value="Dtyr_deacylase"/>
    <property type="match status" value="1"/>
</dbReference>
<dbReference type="FunFam" id="3.50.80.10:FF:000001">
    <property type="entry name" value="D-aminoacyl-tRNA deacylase"/>
    <property type="match status" value="1"/>
</dbReference>
<dbReference type="Gene3D" id="3.50.80.10">
    <property type="entry name" value="D-tyrosyl-tRNA(Tyr) deacylase"/>
    <property type="match status" value="1"/>
</dbReference>
<dbReference type="HAMAP" id="MF_00518">
    <property type="entry name" value="Deacylase_Dtd"/>
    <property type="match status" value="1"/>
</dbReference>
<dbReference type="InterPro" id="IPR003732">
    <property type="entry name" value="Daa-tRNA_deacyls_DTD"/>
</dbReference>
<dbReference type="InterPro" id="IPR023509">
    <property type="entry name" value="DTD-like_sf"/>
</dbReference>
<dbReference type="NCBIfam" id="TIGR00256">
    <property type="entry name" value="D-aminoacyl-tRNA deacylase"/>
    <property type="match status" value="1"/>
</dbReference>
<dbReference type="PANTHER" id="PTHR10472:SF5">
    <property type="entry name" value="D-AMINOACYL-TRNA DEACYLASE 1"/>
    <property type="match status" value="1"/>
</dbReference>
<dbReference type="PANTHER" id="PTHR10472">
    <property type="entry name" value="D-TYROSYL-TRNA TYR DEACYLASE"/>
    <property type="match status" value="1"/>
</dbReference>
<dbReference type="Pfam" id="PF02580">
    <property type="entry name" value="Tyr_Deacylase"/>
    <property type="match status" value="1"/>
</dbReference>
<dbReference type="SUPFAM" id="SSF69500">
    <property type="entry name" value="DTD-like"/>
    <property type="match status" value="1"/>
</dbReference>
<sequence>MKLVLQRVKEASVSIDGKIAGAINQGLLLLVGVGPDDAAEDLAYAVRKIVNMRIFSDADGKMNQSIQDIKGSILSVSQFTLYADTKKGNRPAFTGAAKPDMASQFYDRFNEQLADFVPVERGVFGADMQVSLINDGPVTIILDTKCH</sequence>
<comment type="function">
    <text evidence="1">An aminoacyl-tRNA editing enzyme that deacylates mischarged D-aminoacyl-tRNAs. Also deacylates mischarged glycyl-tRNA(Ala), protecting cells against glycine mischarging by AlaRS. Acts via tRNA-based rather than protein-based catalysis; rejects L-amino acids rather than detecting D-amino acids in the active site. By recycling D-aminoacyl-tRNA to D-amino acids and free tRNA molecules, this enzyme counteracts the toxicity associated with the formation of D-aminoacyl-tRNA entities in vivo and helps enforce protein L-homochirality.</text>
</comment>
<comment type="catalytic activity">
    <reaction evidence="1">
        <text>glycyl-tRNA(Ala) + H2O = tRNA(Ala) + glycine + H(+)</text>
        <dbReference type="Rhea" id="RHEA:53744"/>
        <dbReference type="Rhea" id="RHEA-COMP:9657"/>
        <dbReference type="Rhea" id="RHEA-COMP:13640"/>
        <dbReference type="ChEBI" id="CHEBI:15377"/>
        <dbReference type="ChEBI" id="CHEBI:15378"/>
        <dbReference type="ChEBI" id="CHEBI:57305"/>
        <dbReference type="ChEBI" id="CHEBI:78442"/>
        <dbReference type="ChEBI" id="CHEBI:78522"/>
        <dbReference type="EC" id="3.1.1.96"/>
    </reaction>
</comment>
<comment type="catalytic activity">
    <reaction evidence="1">
        <text>a D-aminoacyl-tRNA + H2O = a tRNA + a D-alpha-amino acid + H(+)</text>
        <dbReference type="Rhea" id="RHEA:13953"/>
        <dbReference type="Rhea" id="RHEA-COMP:10123"/>
        <dbReference type="Rhea" id="RHEA-COMP:10124"/>
        <dbReference type="ChEBI" id="CHEBI:15377"/>
        <dbReference type="ChEBI" id="CHEBI:15378"/>
        <dbReference type="ChEBI" id="CHEBI:59871"/>
        <dbReference type="ChEBI" id="CHEBI:78442"/>
        <dbReference type="ChEBI" id="CHEBI:79333"/>
        <dbReference type="EC" id="3.1.1.96"/>
    </reaction>
</comment>
<comment type="subunit">
    <text evidence="1">Homodimer.</text>
</comment>
<comment type="subcellular location">
    <subcellularLocation>
        <location evidence="1">Cytoplasm</location>
    </subcellularLocation>
</comment>
<comment type="domain">
    <text evidence="1">A Gly-cisPro motif from one monomer fits into the active site of the other monomer to allow specific chiral rejection of L-amino acids.</text>
</comment>
<comment type="similarity">
    <text evidence="1">Belongs to the DTD family.</text>
</comment>
<reference key="1">
    <citation type="journal article" date="1993" name="Mol. Gen. Genet.">
        <title>Genetic organization of the streptokinase region of the Streptococcus equisimilis H46A chromosome.</title>
        <authorList>
            <person name="Mechold U."/>
            <person name="Steiner K."/>
            <person name="Vettermann S."/>
            <person name="Malke H."/>
        </authorList>
    </citation>
    <scope>NUCLEOTIDE SEQUENCE [GENOMIC DNA]</scope>
    <scope>SEQUENCE REVISION TO 48</scope>
    <source>
        <strain>H46A</strain>
    </source>
</reference>
<reference key="2">
    <citation type="journal article" date="1985" name="Gene">
        <title>Nucleotide sequence of the streptokinase gene from Streptococcus equisimilis H46A.</title>
        <authorList>
            <person name="Malke H."/>
            <person name="Roe B.A."/>
            <person name="Ferretti J.J."/>
        </authorList>
    </citation>
    <scope>NUCLEOTIDE SEQUENCE [GENOMIC DNA] OF 38-147</scope>
    <source>
        <strain>H46A</strain>
    </source>
</reference>
<organism>
    <name type="scientific">Streptococcus dysgalactiae subsp. equisimilis</name>
    <name type="common">Streptococcus equisimilis</name>
    <dbReference type="NCBI Taxonomy" id="119602"/>
    <lineage>
        <taxon>Bacteria</taxon>
        <taxon>Bacillati</taxon>
        <taxon>Bacillota</taxon>
        <taxon>Bacilli</taxon>
        <taxon>Lactobacillales</taxon>
        <taxon>Streptococcaceae</taxon>
        <taxon>Streptococcus</taxon>
    </lineage>
</organism>
<feature type="chain" id="PRO_0000164598" description="D-aminoacyl-tRNA deacylase">
    <location>
        <begin position="1"/>
        <end position="147"/>
    </location>
</feature>
<feature type="short sequence motif" description="Gly-cisPro motif, important for rejection of L-amino acids" evidence="1">
    <location>
        <begin position="136"/>
        <end position="137"/>
    </location>
</feature>
<gene>
    <name evidence="1" type="primary">dtd</name>
</gene>
<proteinExistence type="inferred from homology"/>
<accession>Q54088</accession>
<keyword id="KW-0963">Cytoplasm</keyword>
<keyword id="KW-0378">Hydrolase</keyword>
<keyword id="KW-0694">RNA-binding</keyword>
<keyword id="KW-0820">tRNA-binding</keyword>
<name>DTD_STREQ</name>
<evidence type="ECO:0000255" key="1">
    <source>
        <dbReference type="HAMAP-Rule" id="MF_00518"/>
    </source>
</evidence>